<sequence length="1262" mass="139179">MSGSKSVSPPGYAAQTAASPAPRGGPEHRAAWGEADSRANGYPHAPGGSTRGSTKRSGGAVTPQQQQRLASRWRGGDDDEDPPLSGDDPLVGGFGFSFRSKSAWQERGGDDGGRGSRRQRRGAAGGGSTRAPPAGGSGSSAAAAAAAGGTEVRPRSVEVGLEERRGKGRAAEELEPGTGTVEDGDGSEDGGSSVASGSGTGTVLSLGACCLALLQIFRSKKFPSDKLERLYQRYFFRLNQSSLTMLMAVLVLVCLVMLAFHAARPPLQVVYLAVLAAAVGVILIMAVLCNRAAFHQDHMGLACYALIAVVLAVQVVGLLLPQPRSASEGIWWTVFFIYTIYTLLPVRMRAAVLSGVLLSALHLAISLHTNAQDQFLLKQLVSNVLIFSCTNIVGVCTHYPAEVSQRQAFQETRECIQARLHSQRENQQQERLLLSVLPRHVAMEMKADINAKQEDMMFHKIYIQKHDNVSILFADIEGFTSLASQCTAQELVMTLNELFARFDKLAAENHCLRIKILGDCYYCVSGLPEARADHAHCCVEMGMDMIEAISSVREVTGVNVNMRVGIHSGRVHCGVLGLRKWQFDVWSNDVTLANHMEAGGKAGRIHITKATLNYLNGDYEVEPGCGGERNAYLKEHSIETFLILRCTQKRKEEKAMIAKMNRQRTNSIGHNPPHWGAERPFYNHLGGNQVSKEMKRMGFEDPKDKNAQESANPEDEVDEFLGRAIDARSIDRLRSEHVRKFLLTFREPDLEKKYSKQVDDRFGAYVACASLVFLFICFVQITIVPHSLFMLSFYLSCFLLLALVVFISVIYACVKLFPTPLQTLSRKIVRSKKNSTLVGVFTITLVFLSAFVNMFMCNSKNLVGCLAEEHNITVNQVNACHVMESAFNYSLGDEQGFCGSPQSNCNFPEYFTYSVLLSLLACSVFLQISCIGKLVLMLAIELIYVLIVEVPGVTLFDNADLLVTANAIDFSNNGTSQCPEHATKVALKVVTPIIISVFVLALYLHAQQVESTARLDFLWKLQATEEKEEMEELQAYNRRLLHNILPKDVAAHFLARERRNDELYYQSCECVAVMFASIANFSEFYVELEANNEGVECLRLLNEIIADFDEIISEDRFRQLEKIKTIGSTYMAASGLNDSTYDKAGKTHIKALADFAMKLMDQMKYINEHSFNNFQMKIGLNIGPVVAGVIGARKPQYDIWGNTVNVASRMDSTGVPDRIQVTTDMYQVLAANTYQLECRGVVKVKGKGEMMTYFLNGGPPLS</sequence>
<comment type="function">
    <text evidence="3 11">Catalyzes the formation of the signaling molecule cAMP in response to G-protein signaling (PubMed:1409703). Mediates signaling downstream of ADRB1. Regulates the increase of free cytosolic Ca(2+) in response to increased blood glucose levels and contributes to the regulation of Ca(2+)-dependent insulin secretion.</text>
</comment>
<comment type="catalytic activity">
    <reaction evidence="11">
        <text>ATP = 3',5'-cyclic AMP + diphosphate</text>
        <dbReference type="Rhea" id="RHEA:15389"/>
        <dbReference type="ChEBI" id="CHEBI:30616"/>
        <dbReference type="ChEBI" id="CHEBI:33019"/>
        <dbReference type="ChEBI" id="CHEBI:58165"/>
        <dbReference type="EC" id="4.6.1.1"/>
    </reaction>
</comment>
<comment type="cofactor">
    <cofactor evidence="5">
        <name>Mg(2+)</name>
        <dbReference type="ChEBI" id="CHEBI:18420"/>
    </cofactor>
    <cofactor evidence="5">
        <name>Mn(2+)</name>
        <dbReference type="ChEBI" id="CHEBI:29035"/>
    </cofactor>
    <text evidence="5">Binds 2 magnesium ions per subunit. Is also active with manganese (in vitro).</text>
</comment>
<comment type="activity regulation">
    <text evidence="3 5">Activated by forskolin. Activated by GNAS. Activity is further increased by interaction with the G protein beta and gamma subunit complex formed by GNB1 and GNG2 (By similarity). Is not activated by calmodulin. Inhibited by adenosine and ATP analogs. Inhibited by calcium ions, already at micromolar concentrations (By similarity). Phosphorylation by RAF1 results in its activation (By similarity).</text>
</comment>
<comment type="subunit">
    <text evidence="3 6">Interacts with GNAS, GNB1 and GNG2 (By similarity). Part of a complex containing AKAP5, ADCY6, PDE4C and PKD2 (By similarity). Interacts with RAF1 (By similarity).</text>
</comment>
<comment type="subcellular location">
    <subcellularLocation>
        <location evidence="5">Cell membrane</location>
        <topology evidence="5">Multi-pass membrane protein</topology>
    </subcellularLocation>
    <subcellularLocation>
        <location evidence="6">Cell projection</location>
        <location evidence="6">Cilium</location>
    </subcellularLocation>
</comment>
<comment type="tissue specificity">
    <text evidence="11">Detected in brain and kidney.</text>
</comment>
<comment type="domain">
    <text evidence="5">The protein contains two modules with six transmembrane helices each; both are required for catalytic activity. Isolated N-terminal or C-terminal guanylate cyclase domains have no catalytic activity, but when they are brought together, enzyme activity is restored. The active site is at the interface of the two domains. Both contribute substrate-binding residues, but the catalytic metal ions are bound exclusively via the N-terminal guanylate cyclase domain.</text>
</comment>
<comment type="PTM">
    <text evidence="1">Phosphorylated by RAF1.</text>
</comment>
<comment type="similarity">
    <text evidence="9">Belongs to the adenylyl cyclase class-4/guanylyl cyclase family.</text>
</comment>
<keyword id="KW-0067">ATP-binding</keyword>
<keyword id="KW-0115">cAMP biosynthesis</keyword>
<keyword id="KW-1003">Cell membrane</keyword>
<keyword id="KW-0966">Cell projection</keyword>
<keyword id="KW-0969">Cilium</keyword>
<keyword id="KW-0325">Glycoprotein</keyword>
<keyword id="KW-0456">Lyase</keyword>
<keyword id="KW-0460">Magnesium</keyword>
<keyword id="KW-0472">Membrane</keyword>
<keyword id="KW-0479">Metal-binding</keyword>
<keyword id="KW-0488">Methylation</keyword>
<keyword id="KW-0547">Nucleotide-binding</keyword>
<keyword id="KW-0597">Phosphoprotein</keyword>
<keyword id="KW-1185">Reference proteome</keyword>
<keyword id="KW-0677">Repeat</keyword>
<keyword id="KW-0812">Transmembrane</keyword>
<keyword id="KW-1133">Transmembrane helix</keyword>
<gene>
    <name type="primary">Adcy5</name>
</gene>
<organism>
    <name type="scientific">Rattus norvegicus</name>
    <name type="common">Rat</name>
    <dbReference type="NCBI Taxonomy" id="10116"/>
    <lineage>
        <taxon>Eukaryota</taxon>
        <taxon>Metazoa</taxon>
        <taxon>Chordata</taxon>
        <taxon>Craniata</taxon>
        <taxon>Vertebrata</taxon>
        <taxon>Euteleostomi</taxon>
        <taxon>Mammalia</taxon>
        <taxon>Eutheria</taxon>
        <taxon>Euarchontoglires</taxon>
        <taxon>Glires</taxon>
        <taxon>Rodentia</taxon>
        <taxon>Myomorpha</taxon>
        <taxon>Muroidea</taxon>
        <taxon>Muridae</taxon>
        <taxon>Murinae</taxon>
        <taxon>Rattus</taxon>
    </lineage>
</organism>
<reference key="1">
    <citation type="submission" date="1996-12" db="EMBL/GenBank/DDBJ databases">
        <authorList>
            <person name="Premont R.T."/>
        </authorList>
    </citation>
    <scope>NUCLEOTIDE SEQUENCE [MRNA]</scope>
    <source>
        <strain>Sprague-Dawley</strain>
        <tissue>Heart</tissue>
        <tissue>Kidney</tissue>
        <tissue>Liver</tissue>
    </source>
</reference>
<reference key="2">
    <citation type="journal article" date="1992" name="Proc. Natl. Acad. Sci. U.S.A.">
        <title>Two members of a widely expressed subfamily of hormone-stimulated adenylyl cyclases.</title>
        <authorList>
            <person name="Premont R.T."/>
            <person name="Chen J."/>
            <person name="Ma H.-W."/>
            <person name="Ponnapalli M."/>
            <person name="Iyengar R."/>
        </authorList>
    </citation>
    <scope>NUCLEOTIDE SEQUENCE [MRNA] OF 164-1262</scope>
    <scope>CATALYTIC ACTIVITY</scope>
    <scope>FUNCTION</scope>
    <scope>TISSUE SPECIFICITY</scope>
    <source>
        <tissue>Liver</tissue>
    </source>
</reference>
<protein>
    <recommendedName>
        <fullName>Adenylate cyclase type 5</fullName>
        <ecNumber evidence="11">4.6.1.1</ecNumber>
    </recommendedName>
    <alternativeName>
        <fullName>ATP pyrophosphate-lyase 5</fullName>
    </alternativeName>
    <alternativeName>
        <fullName>Adenylate cyclase type V</fullName>
    </alternativeName>
    <alternativeName>
        <fullName>Adenylyl cyclase 5</fullName>
    </alternativeName>
</protein>
<name>ADCY5_RAT</name>
<dbReference type="EC" id="4.6.1.1" evidence="11"/>
<dbReference type="EMBL" id="M96159">
    <property type="protein sequence ID" value="AAB39764.1"/>
    <property type="molecule type" value="mRNA"/>
</dbReference>
<dbReference type="RefSeq" id="NP_072122.1">
    <property type="nucleotide sequence ID" value="NM_022600.1"/>
</dbReference>
<dbReference type="SMR" id="Q04400"/>
<dbReference type="BioGRID" id="249116">
    <property type="interactions" value="1"/>
</dbReference>
<dbReference type="CORUM" id="Q04400"/>
<dbReference type="FunCoup" id="Q04400">
    <property type="interactions" value="1079"/>
</dbReference>
<dbReference type="STRING" id="10116.ENSRNOP00000046488"/>
<dbReference type="BindingDB" id="Q04400"/>
<dbReference type="ChEMBL" id="CHEMBL2880"/>
<dbReference type="DrugCentral" id="Q04400"/>
<dbReference type="GlyCosmos" id="Q04400">
    <property type="glycosylation" value="3 sites, No reported glycans"/>
</dbReference>
<dbReference type="GlyGen" id="Q04400">
    <property type="glycosylation" value="4 sites"/>
</dbReference>
<dbReference type="PhosphoSitePlus" id="Q04400"/>
<dbReference type="SwissPalm" id="Q04400"/>
<dbReference type="PaxDb" id="10116-ENSRNOP00000046488"/>
<dbReference type="GeneID" id="64532"/>
<dbReference type="KEGG" id="rno:64532"/>
<dbReference type="UCSC" id="RGD:71014">
    <property type="organism name" value="rat"/>
</dbReference>
<dbReference type="AGR" id="RGD:71014"/>
<dbReference type="CTD" id="111"/>
<dbReference type="RGD" id="71014">
    <property type="gene designation" value="Adcy5"/>
</dbReference>
<dbReference type="eggNOG" id="KOG3619">
    <property type="taxonomic scope" value="Eukaryota"/>
</dbReference>
<dbReference type="InParanoid" id="Q04400"/>
<dbReference type="BRENDA" id="4.6.1.1">
    <property type="organism ID" value="5301"/>
</dbReference>
<dbReference type="Reactome" id="R-RNO-163615">
    <property type="pathway name" value="PKA activation"/>
</dbReference>
<dbReference type="Reactome" id="R-RNO-170660">
    <property type="pathway name" value="Adenylate cyclase activating pathway"/>
</dbReference>
<dbReference type="Reactome" id="R-RNO-170670">
    <property type="pathway name" value="Adenylate cyclase inhibitory pathway"/>
</dbReference>
<dbReference type="Reactome" id="R-RNO-400042">
    <property type="pathway name" value="Adrenaline,noradrenaline inhibits insulin secretion"/>
</dbReference>
<dbReference type="Reactome" id="R-RNO-418597">
    <property type="pathway name" value="G alpha (z) signalling events"/>
</dbReference>
<dbReference type="Reactome" id="R-RNO-5610787">
    <property type="pathway name" value="Hedgehog 'off' state"/>
</dbReference>
<dbReference type="PRO" id="PR:Q04400"/>
<dbReference type="Proteomes" id="UP000002494">
    <property type="component" value="Unplaced"/>
</dbReference>
<dbReference type="GO" id="GO:0005929">
    <property type="term" value="C:cilium"/>
    <property type="evidence" value="ECO:0000250"/>
    <property type="project" value="UniProtKB"/>
</dbReference>
<dbReference type="GO" id="GO:0005768">
    <property type="term" value="C:endosome"/>
    <property type="evidence" value="ECO:0000314"/>
    <property type="project" value="RGD"/>
</dbReference>
<dbReference type="GO" id="GO:0016020">
    <property type="term" value="C:membrane"/>
    <property type="evidence" value="ECO:0000250"/>
    <property type="project" value="UniProtKB"/>
</dbReference>
<dbReference type="GO" id="GO:0005886">
    <property type="term" value="C:plasma membrane"/>
    <property type="evidence" value="ECO:0000266"/>
    <property type="project" value="RGD"/>
</dbReference>
<dbReference type="GO" id="GO:0042383">
    <property type="term" value="C:sarcolemma"/>
    <property type="evidence" value="ECO:0000314"/>
    <property type="project" value="RGD"/>
</dbReference>
<dbReference type="GO" id="GO:0004016">
    <property type="term" value="F:adenylate cyclase activity"/>
    <property type="evidence" value="ECO:0000314"/>
    <property type="project" value="RGD"/>
</dbReference>
<dbReference type="GO" id="GO:0008179">
    <property type="term" value="F:adenylate cyclase binding"/>
    <property type="evidence" value="ECO:0000266"/>
    <property type="project" value="RGD"/>
</dbReference>
<dbReference type="GO" id="GO:0005524">
    <property type="term" value="F:ATP binding"/>
    <property type="evidence" value="ECO:0007669"/>
    <property type="project" value="UniProtKB-KW"/>
</dbReference>
<dbReference type="GO" id="GO:0008294">
    <property type="term" value="F:calcium- and calmodulin-responsive adenylate cyclase activity"/>
    <property type="evidence" value="ECO:0000314"/>
    <property type="project" value="RGD"/>
</dbReference>
<dbReference type="GO" id="GO:0046872">
    <property type="term" value="F:metal ion binding"/>
    <property type="evidence" value="ECO:0007669"/>
    <property type="project" value="UniProtKB-KW"/>
</dbReference>
<dbReference type="GO" id="GO:0097110">
    <property type="term" value="F:scaffold protein binding"/>
    <property type="evidence" value="ECO:0000266"/>
    <property type="project" value="RGD"/>
</dbReference>
<dbReference type="GO" id="GO:0007191">
    <property type="term" value="P:adenylate cyclase-activating dopamine receptor signaling pathway"/>
    <property type="evidence" value="ECO:0000266"/>
    <property type="project" value="RGD"/>
</dbReference>
<dbReference type="GO" id="GO:0007189">
    <property type="term" value="P:adenylate cyclase-activating G protein-coupled receptor signaling pathway"/>
    <property type="evidence" value="ECO:0000315"/>
    <property type="project" value="RGD"/>
</dbReference>
<dbReference type="GO" id="GO:0007195">
    <property type="term" value="P:adenylate cyclase-inhibiting dopamine receptor signaling pathway"/>
    <property type="evidence" value="ECO:0000266"/>
    <property type="project" value="RGD"/>
</dbReference>
<dbReference type="GO" id="GO:0006171">
    <property type="term" value="P:cAMP biosynthetic process"/>
    <property type="evidence" value="ECO:0000314"/>
    <property type="project" value="RGD"/>
</dbReference>
<dbReference type="GO" id="GO:1904322">
    <property type="term" value="P:cellular response to forskolin"/>
    <property type="evidence" value="ECO:0000250"/>
    <property type="project" value="UniProtKB"/>
</dbReference>
<dbReference type="GO" id="GO:0001973">
    <property type="term" value="P:G protein-coupled adenosine receptor signaling pathway"/>
    <property type="evidence" value="ECO:0000266"/>
    <property type="project" value="RGD"/>
</dbReference>
<dbReference type="GO" id="GO:0007507">
    <property type="term" value="P:heart development"/>
    <property type="evidence" value="ECO:0000270"/>
    <property type="project" value="RGD"/>
</dbReference>
<dbReference type="GO" id="GO:0035556">
    <property type="term" value="P:intracellular signal transduction"/>
    <property type="evidence" value="ECO:0007669"/>
    <property type="project" value="InterPro"/>
</dbReference>
<dbReference type="GO" id="GO:0007626">
    <property type="term" value="P:locomotory behavior"/>
    <property type="evidence" value="ECO:0000266"/>
    <property type="project" value="RGD"/>
</dbReference>
<dbReference type="GO" id="GO:0050885">
    <property type="term" value="P:neuromuscular process controlling balance"/>
    <property type="evidence" value="ECO:0000266"/>
    <property type="project" value="RGD"/>
</dbReference>
<dbReference type="GO" id="GO:0007204">
    <property type="term" value="P:positive regulation of cytosolic calcium ion concentration"/>
    <property type="evidence" value="ECO:0000250"/>
    <property type="project" value="UniProtKB"/>
</dbReference>
<dbReference type="GO" id="GO:0061178">
    <property type="term" value="P:regulation of insulin secretion involved in cellular response to glucose stimulus"/>
    <property type="evidence" value="ECO:0000250"/>
    <property type="project" value="UniProtKB"/>
</dbReference>
<dbReference type="CDD" id="cd07302">
    <property type="entry name" value="CHD"/>
    <property type="match status" value="2"/>
</dbReference>
<dbReference type="FunFam" id="3.30.70.1230:FF:000001">
    <property type="entry name" value="Adenylate cyclase"/>
    <property type="match status" value="1"/>
</dbReference>
<dbReference type="FunFam" id="3.30.70.1230:FF:000002">
    <property type="entry name" value="Adenylate cyclase"/>
    <property type="match status" value="1"/>
</dbReference>
<dbReference type="Gene3D" id="3.30.70.1230">
    <property type="entry name" value="Nucleotide cyclase"/>
    <property type="match status" value="2"/>
</dbReference>
<dbReference type="InterPro" id="IPR001054">
    <property type="entry name" value="A/G_cyclase"/>
</dbReference>
<dbReference type="InterPro" id="IPR018297">
    <property type="entry name" value="A/G_cyclase_CS"/>
</dbReference>
<dbReference type="InterPro" id="IPR032628">
    <property type="entry name" value="AC_N"/>
</dbReference>
<dbReference type="InterPro" id="IPR030672">
    <property type="entry name" value="Adcy"/>
</dbReference>
<dbReference type="InterPro" id="IPR009398">
    <property type="entry name" value="Adcy_conserved_dom"/>
</dbReference>
<dbReference type="InterPro" id="IPR029787">
    <property type="entry name" value="Nucleotide_cyclase"/>
</dbReference>
<dbReference type="PANTHER" id="PTHR45627">
    <property type="entry name" value="ADENYLATE CYCLASE TYPE 1"/>
    <property type="match status" value="1"/>
</dbReference>
<dbReference type="PANTHER" id="PTHR45627:SF7">
    <property type="entry name" value="ADENYLATE CYCLASE TYPE 5"/>
    <property type="match status" value="1"/>
</dbReference>
<dbReference type="Pfam" id="PF16214">
    <property type="entry name" value="AC_N"/>
    <property type="match status" value="1"/>
</dbReference>
<dbReference type="Pfam" id="PF06327">
    <property type="entry name" value="Adcy_cons_dom"/>
    <property type="match status" value="1"/>
</dbReference>
<dbReference type="Pfam" id="PF00211">
    <property type="entry name" value="Guanylate_cyc"/>
    <property type="match status" value="2"/>
</dbReference>
<dbReference type="PIRSF" id="PIRSF039050">
    <property type="entry name" value="Ade_cyc"/>
    <property type="match status" value="1"/>
</dbReference>
<dbReference type="SMART" id="SM00044">
    <property type="entry name" value="CYCc"/>
    <property type="match status" value="2"/>
</dbReference>
<dbReference type="SUPFAM" id="SSF55073">
    <property type="entry name" value="Nucleotide cyclase"/>
    <property type="match status" value="2"/>
</dbReference>
<dbReference type="PROSITE" id="PS00452">
    <property type="entry name" value="GUANYLATE_CYCLASE_1"/>
    <property type="match status" value="2"/>
</dbReference>
<dbReference type="PROSITE" id="PS50125">
    <property type="entry name" value="GUANYLATE_CYCLASE_2"/>
    <property type="match status" value="2"/>
</dbReference>
<evidence type="ECO:0000250" key="1"/>
<evidence type="ECO:0000250" key="2">
    <source>
        <dbReference type="UniProtKB" id="O43306"/>
    </source>
</evidence>
<evidence type="ECO:0000250" key="3">
    <source>
        <dbReference type="UniProtKB" id="O95622"/>
    </source>
</evidence>
<evidence type="ECO:0000250" key="4">
    <source>
        <dbReference type="UniProtKB" id="P26769"/>
    </source>
</evidence>
<evidence type="ECO:0000250" key="5">
    <source>
        <dbReference type="UniProtKB" id="P30803"/>
    </source>
</evidence>
<evidence type="ECO:0000250" key="6">
    <source>
        <dbReference type="UniProtKB" id="P84309"/>
    </source>
</evidence>
<evidence type="ECO:0000250" key="7">
    <source>
        <dbReference type="UniProtKB" id="Q03343"/>
    </source>
</evidence>
<evidence type="ECO:0000255" key="8"/>
<evidence type="ECO:0000255" key="9">
    <source>
        <dbReference type="PROSITE-ProRule" id="PRU00099"/>
    </source>
</evidence>
<evidence type="ECO:0000256" key="10">
    <source>
        <dbReference type="SAM" id="MobiDB-lite"/>
    </source>
</evidence>
<evidence type="ECO:0000269" key="11">
    <source>
    </source>
</evidence>
<feature type="chain" id="PRO_0000195697" description="Adenylate cyclase type 5">
    <location>
        <begin position="1"/>
        <end position="1262"/>
    </location>
</feature>
<feature type="topological domain" description="Cytoplasmic" evidence="8">
    <location>
        <begin position="1"/>
        <end position="242"/>
    </location>
</feature>
<feature type="transmembrane region" description="Helical" evidence="8">
    <location>
        <begin position="243"/>
        <end position="263"/>
    </location>
</feature>
<feature type="transmembrane region" description="Helical" evidence="8">
    <location>
        <begin position="269"/>
        <end position="289"/>
    </location>
</feature>
<feature type="transmembrane region" description="Helical" evidence="8">
    <location>
        <begin position="300"/>
        <end position="320"/>
    </location>
</feature>
<feature type="transmembrane region" description="Helical" evidence="8">
    <location>
        <begin position="326"/>
        <end position="346"/>
    </location>
</feature>
<feature type="transmembrane region" description="Helical" evidence="8">
    <location>
        <begin position="351"/>
        <end position="371"/>
    </location>
</feature>
<feature type="transmembrane region" description="Helical" evidence="8">
    <location>
        <begin position="375"/>
        <end position="395"/>
    </location>
</feature>
<feature type="topological domain" description="Cytoplasmic" evidence="8">
    <location>
        <begin position="396"/>
        <end position="763"/>
    </location>
</feature>
<feature type="transmembrane region" description="Helical" evidence="8">
    <location>
        <begin position="764"/>
        <end position="784"/>
    </location>
</feature>
<feature type="transmembrane region" description="Helical" evidence="8">
    <location>
        <begin position="790"/>
        <end position="810"/>
    </location>
</feature>
<feature type="transmembrane region" description="Helical" evidence="8">
    <location>
        <begin position="837"/>
        <end position="857"/>
    </location>
</feature>
<feature type="topological domain" description="Extracellular" evidence="8">
    <location>
        <begin position="858"/>
        <end position="910"/>
    </location>
</feature>
<feature type="transmembrane region" description="Helical" evidence="8">
    <location>
        <begin position="911"/>
        <end position="931"/>
    </location>
</feature>
<feature type="transmembrane region" description="Helical" evidence="8">
    <location>
        <begin position="936"/>
        <end position="956"/>
    </location>
</feature>
<feature type="transmembrane region" description="Helical" evidence="8">
    <location>
        <begin position="985"/>
        <end position="1005"/>
    </location>
</feature>
<feature type="topological domain" description="Cytoplasmic" evidence="8">
    <location>
        <begin position="1006"/>
        <end position="1262"/>
    </location>
</feature>
<feature type="domain" description="Guanylate cyclase 1" evidence="9">
    <location>
        <begin position="470"/>
        <end position="597"/>
    </location>
</feature>
<feature type="domain" description="Guanylate cyclase 2" evidence="9">
    <location>
        <begin position="1072"/>
        <end position="1211"/>
    </location>
</feature>
<feature type="region of interest" description="Disordered" evidence="10">
    <location>
        <begin position="1"/>
        <end position="196"/>
    </location>
</feature>
<feature type="compositionally biased region" description="Basic and acidic residues" evidence="10">
    <location>
        <begin position="25"/>
        <end position="37"/>
    </location>
</feature>
<feature type="compositionally biased region" description="Low complexity" evidence="10">
    <location>
        <begin position="47"/>
        <end position="59"/>
    </location>
</feature>
<feature type="compositionally biased region" description="Low complexity" evidence="10">
    <location>
        <begin position="129"/>
        <end position="150"/>
    </location>
</feature>
<feature type="compositionally biased region" description="Basic and acidic residues" evidence="10">
    <location>
        <begin position="152"/>
        <end position="172"/>
    </location>
</feature>
<feature type="binding site" evidence="5">
    <location>
        <begin position="475"/>
        <end position="480"/>
    </location>
    <ligand>
        <name>ATP</name>
        <dbReference type="ChEBI" id="CHEBI:30616"/>
    </ligand>
</feature>
<feature type="binding site" evidence="9">
    <location>
        <position position="475"/>
    </location>
    <ligand>
        <name>Mg(2+)</name>
        <dbReference type="ChEBI" id="CHEBI:18420"/>
        <label>1</label>
        <note>catalytic</note>
    </ligand>
</feature>
<feature type="binding site" evidence="9">
    <location>
        <position position="475"/>
    </location>
    <ligand>
        <name>Mg(2+)</name>
        <dbReference type="ChEBI" id="CHEBI:18420"/>
        <label>2</label>
        <note>catalytic</note>
    </ligand>
</feature>
<feature type="binding site" evidence="9">
    <location>
        <position position="476"/>
    </location>
    <ligand>
        <name>Mg(2+)</name>
        <dbReference type="ChEBI" id="CHEBI:18420"/>
        <label>2</label>
        <note>catalytic</note>
    </ligand>
</feature>
<feature type="binding site" evidence="5">
    <location>
        <begin position="517"/>
        <end position="519"/>
    </location>
    <ligand>
        <name>ATP</name>
        <dbReference type="ChEBI" id="CHEBI:30616"/>
    </ligand>
</feature>
<feature type="binding site" evidence="9">
    <location>
        <position position="519"/>
    </location>
    <ligand>
        <name>Mg(2+)</name>
        <dbReference type="ChEBI" id="CHEBI:18420"/>
        <label>1</label>
        <note>catalytic</note>
    </ligand>
</feature>
<feature type="binding site" evidence="9">
    <location>
        <position position="519"/>
    </location>
    <ligand>
        <name>Mg(2+)</name>
        <dbReference type="ChEBI" id="CHEBI:18420"/>
        <label>2</label>
        <note>catalytic</note>
    </ligand>
</feature>
<feature type="binding site" evidence="5">
    <location>
        <position position="563"/>
    </location>
    <ligand>
        <name>ATP</name>
        <dbReference type="ChEBI" id="CHEBI:30616"/>
    </ligand>
</feature>
<feature type="binding site" evidence="4">
    <location>
        <position position="1124"/>
    </location>
    <ligand>
        <name>ATP</name>
        <dbReference type="ChEBI" id="CHEBI:30616"/>
    </ligand>
</feature>
<feature type="binding site" evidence="4">
    <location>
        <begin position="1198"/>
        <end position="1200"/>
    </location>
    <ligand>
        <name>ATP</name>
        <dbReference type="ChEBI" id="CHEBI:30616"/>
    </ligand>
</feature>
<feature type="binding site" evidence="4">
    <location>
        <begin position="1205"/>
        <end position="1209"/>
    </location>
    <ligand>
        <name>ATP</name>
        <dbReference type="ChEBI" id="CHEBI:30616"/>
    </ligand>
</feature>
<feature type="binding site" evidence="4">
    <location>
        <position position="1245"/>
    </location>
    <ligand>
        <name>ATP</name>
        <dbReference type="ChEBI" id="CHEBI:30616"/>
    </ligand>
</feature>
<feature type="modified residue" description="Omega-N-methylarginine" evidence="6">
    <location>
        <position position="23"/>
    </location>
</feature>
<feature type="modified residue" description="Phosphoserine" evidence="6">
    <location>
        <position position="97"/>
    </location>
</feature>
<feature type="modified residue" description="Phosphoserine" evidence="6">
    <location>
        <position position="156"/>
    </location>
</feature>
<feature type="modified residue" description="Phosphoserine" evidence="2">
    <location>
        <position position="667"/>
    </location>
</feature>
<feature type="modified residue" description="Phosphoserine" evidence="7">
    <location>
        <position position="755"/>
    </location>
</feature>
<feature type="modified residue" description="Phosphothreonine" evidence="7">
    <location>
        <position position="1012"/>
    </location>
</feature>
<feature type="glycosylation site" description="N-linked (GlcNAc...) asparagine" evidence="8">
    <location>
        <position position="871"/>
    </location>
</feature>
<feature type="glycosylation site" description="N-linked (GlcNAc...) asparagine" evidence="8">
    <location>
        <position position="888"/>
    </location>
</feature>
<feature type="glycosylation site" description="N-linked (GlcNAc...) asparagine" evidence="8">
    <location>
        <position position="973"/>
    </location>
</feature>
<accession>Q04400</accession>
<proteinExistence type="evidence at protein level"/>